<evidence type="ECO:0000250" key="1">
    <source>
        <dbReference type="UniProtKB" id="Q8J0P4"/>
    </source>
</evidence>
<evidence type="ECO:0000255" key="2"/>
<evidence type="ECO:0000255" key="3">
    <source>
        <dbReference type="PROSITE-ProRule" id="PRU00498"/>
    </source>
</evidence>
<evidence type="ECO:0000255" key="4">
    <source>
        <dbReference type="PROSITE-ProRule" id="PRU01098"/>
    </source>
</evidence>
<evidence type="ECO:0000269" key="5">
    <source>
    </source>
</evidence>
<evidence type="ECO:0000303" key="6">
    <source>
    </source>
</evidence>
<evidence type="ECO:0000305" key="7"/>
<evidence type="ECO:0000305" key="8">
    <source>
    </source>
</evidence>
<feature type="signal peptide" evidence="2">
    <location>
        <begin position="1"/>
        <end position="21"/>
    </location>
</feature>
<feature type="chain" id="PRO_5016913505" description="Crh-like protein 4" evidence="2">
    <location>
        <begin position="22"/>
        <end position="346"/>
    </location>
</feature>
<feature type="propeptide" id="PRO_0000462229" description="Removed in mature form" evidence="2">
    <location>
        <begin position="347"/>
        <end position="376"/>
    </location>
</feature>
<feature type="domain" description="GH16" evidence="4">
    <location>
        <begin position="22"/>
        <end position="229"/>
    </location>
</feature>
<feature type="active site" description="Nucleophile" evidence="8">
    <location>
        <position position="119"/>
    </location>
</feature>
<feature type="active site" description="Proton donor" evidence="8">
    <location>
        <position position="123"/>
    </location>
</feature>
<feature type="binding site" evidence="1">
    <location>
        <position position="123"/>
    </location>
    <ligand>
        <name>chitin</name>
        <dbReference type="ChEBI" id="CHEBI:17029"/>
    </ligand>
</feature>
<feature type="binding site" evidence="1">
    <location>
        <position position="202"/>
    </location>
    <ligand>
        <name>chitin</name>
        <dbReference type="ChEBI" id="CHEBI:17029"/>
    </ligand>
</feature>
<feature type="binding site" evidence="1">
    <location>
        <position position="206"/>
    </location>
    <ligand>
        <name>chitin</name>
        <dbReference type="ChEBI" id="CHEBI:17029"/>
    </ligand>
</feature>
<feature type="binding site" evidence="1">
    <location>
        <position position="217"/>
    </location>
    <ligand>
        <name>chitin</name>
        <dbReference type="ChEBI" id="CHEBI:17029"/>
    </ligand>
</feature>
<feature type="lipid moiety-binding region" description="GPI-anchor amidated serine" evidence="2">
    <location>
        <position position="346"/>
    </location>
</feature>
<feature type="glycosylation site" description="N-linked (GlcNAc...) asparagine" evidence="3">
    <location>
        <position position="351"/>
    </location>
</feature>
<feature type="disulfide bond" evidence="1">
    <location>
        <begin position="27"/>
        <end position="35"/>
    </location>
</feature>
<protein>
    <recommendedName>
        <fullName evidence="6">Crh-like protein 4</fullName>
    </recommendedName>
    <domain>
        <recommendedName>
            <fullName evidence="1">Chitinase crh4</fullName>
            <ecNumber evidence="1">3.2.1.14</ecNumber>
        </recommendedName>
    </domain>
    <domain>
        <recommendedName>
            <fullName evidence="1">Chitin transglycosylase crh4</fullName>
            <ecNumber evidence="1">2.4.-.-</ecNumber>
        </recommendedName>
    </domain>
</protein>
<gene>
    <name evidence="6" type="primary">crh4</name>
    <name type="ORF">BCIN_07g04870</name>
</gene>
<dbReference type="EC" id="3.2.1.14" evidence="1"/>
<dbReference type="EC" id="2.4.-.-" evidence="1"/>
<dbReference type="EMBL" id="CP009811">
    <property type="protein sequence ID" value="ATZ51942.1"/>
    <property type="molecule type" value="Genomic_DNA"/>
</dbReference>
<dbReference type="RefSeq" id="XP_024549890.1">
    <property type="nucleotide sequence ID" value="XM_024694101.1"/>
</dbReference>
<dbReference type="EnsemblFungi" id="Bcin07g04870.1">
    <property type="protein sequence ID" value="Bcin07p04870.1"/>
    <property type="gene ID" value="Bcin07g04870"/>
</dbReference>
<dbReference type="GeneID" id="5434619"/>
<dbReference type="VEuPathDB" id="FungiDB:Bcin07g04870"/>
<dbReference type="OrthoDB" id="4781at2759"/>
<dbReference type="Proteomes" id="UP000001798">
    <property type="component" value="Chromosome bcin07"/>
</dbReference>
<dbReference type="GO" id="GO:0009277">
    <property type="term" value="C:fungal-type cell wall"/>
    <property type="evidence" value="ECO:0007669"/>
    <property type="project" value="EnsemblFungi"/>
</dbReference>
<dbReference type="GO" id="GO:0000131">
    <property type="term" value="C:incipient cellular bud site"/>
    <property type="evidence" value="ECO:0007669"/>
    <property type="project" value="EnsemblFungi"/>
</dbReference>
<dbReference type="GO" id="GO:0098552">
    <property type="term" value="C:side of membrane"/>
    <property type="evidence" value="ECO:0007669"/>
    <property type="project" value="UniProtKB-KW"/>
</dbReference>
<dbReference type="GO" id="GO:0016757">
    <property type="term" value="F:glycosyltransferase activity"/>
    <property type="evidence" value="ECO:0007669"/>
    <property type="project" value="EnsemblFungi"/>
</dbReference>
<dbReference type="GO" id="GO:0004553">
    <property type="term" value="F:hydrolase activity, hydrolyzing O-glycosyl compounds"/>
    <property type="evidence" value="ECO:0007669"/>
    <property type="project" value="UniProtKB-UniRule"/>
</dbReference>
<dbReference type="GO" id="GO:0005975">
    <property type="term" value="P:carbohydrate metabolic process"/>
    <property type="evidence" value="ECO:0007669"/>
    <property type="project" value="InterPro"/>
</dbReference>
<dbReference type="GO" id="GO:0006030">
    <property type="term" value="P:chitin metabolic process"/>
    <property type="evidence" value="ECO:0007669"/>
    <property type="project" value="EnsemblFungi"/>
</dbReference>
<dbReference type="GO" id="GO:0031505">
    <property type="term" value="P:fungal-type cell wall organization"/>
    <property type="evidence" value="ECO:0007669"/>
    <property type="project" value="EnsemblFungi"/>
</dbReference>
<dbReference type="CDD" id="cd02183">
    <property type="entry name" value="GH16_fungal_CRH1_transglycosylase"/>
    <property type="match status" value="1"/>
</dbReference>
<dbReference type="FunFam" id="2.60.120.200:FF:000152">
    <property type="entry name" value="Cell wall glucanase"/>
    <property type="match status" value="1"/>
</dbReference>
<dbReference type="Gene3D" id="2.60.120.200">
    <property type="match status" value="1"/>
</dbReference>
<dbReference type="InterPro" id="IPR013320">
    <property type="entry name" value="ConA-like_dom_sf"/>
</dbReference>
<dbReference type="InterPro" id="IPR000757">
    <property type="entry name" value="GH16"/>
</dbReference>
<dbReference type="InterPro" id="IPR017168">
    <property type="entry name" value="Glyco_hydro_16_CRH1_prd"/>
</dbReference>
<dbReference type="InterPro" id="IPR050546">
    <property type="entry name" value="Glycosyl_Hydrlase_16"/>
</dbReference>
<dbReference type="PANTHER" id="PTHR10963:SF68">
    <property type="entry name" value="GLYCOSIDASE CRH1-RELATED"/>
    <property type="match status" value="1"/>
</dbReference>
<dbReference type="PANTHER" id="PTHR10963">
    <property type="entry name" value="GLYCOSYL HYDROLASE-RELATED"/>
    <property type="match status" value="1"/>
</dbReference>
<dbReference type="Pfam" id="PF00722">
    <property type="entry name" value="Glyco_hydro_16"/>
    <property type="match status" value="1"/>
</dbReference>
<dbReference type="PIRSF" id="PIRSF037299">
    <property type="entry name" value="Glycosidase_CRH1_prd"/>
    <property type="match status" value="1"/>
</dbReference>
<dbReference type="SUPFAM" id="SSF49899">
    <property type="entry name" value="Concanavalin A-like lectins/glucanases"/>
    <property type="match status" value="1"/>
</dbReference>
<dbReference type="PROSITE" id="PS51762">
    <property type="entry name" value="GH16_2"/>
    <property type="match status" value="1"/>
</dbReference>
<dbReference type="PROSITE" id="PS51257">
    <property type="entry name" value="PROKAR_LIPOPROTEIN"/>
    <property type="match status" value="1"/>
</dbReference>
<comment type="function">
    <text evidence="1 5">Dual chitinase/transglycosylase that plays a role in cell wall architecture (PubMed:33846308). Chitinase and transglycosylase activities are coupled (By similarity). Required for the polysaccharide cross-linking at the septa and the cell wall (By similarity). More specifically, transfers chitin to 1,6-beta-glucan in the cell wall (By similarity).</text>
</comment>
<comment type="catalytic activity">
    <reaction evidence="1">
        <text>Random endo-hydrolysis of N-acetyl-beta-D-glucosaminide (1-&gt;4)-beta-linkages in chitin and chitodextrins.</text>
        <dbReference type="EC" id="3.2.1.14"/>
    </reaction>
</comment>
<comment type="subcellular location">
    <subcellularLocation>
        <location evidence="2">Cell membrane</location>
        <topology evidence="2">Lipid-anchor</topology>
        <topology evidence="2">GPI-anchor</topology>
    </subcellularLocation>
</comment>
<comment type="similarity">
    <text evidence="7">Belongs to the glycosyl hydrolase 16 family. CRH1 subfamily.</text>
</comment>
<sequence length="376" mass="39524">MFPKIFLTAATALLSAKSTFAQTYSSCNPLFTTGCPANTALGKSIDVDFTSGSVNSFDGSGDITYDSNGASFTVAKSGDAPTLSSIFYIMFGKVQITMKAAPGAGIVSTLVLQSDDLDEIDMEWLGADDTEVQTNYFGKGKVTDYNRGAFNPAANNQGEFITYTIEWTSEQVVWSVGSTVVRVLTPATADTDQYPQSPMQIKFGAWSGGDSSNAAGTISWARGPTDYSNGPFTMVVQSIDVSDYSTGTQYKYGDQSGDWTSIEAIGGSVNGNVPASASSIQTAGAAAVTSSSPTIPAGINNGNSATRTGYPWVAGTQTVSEVTWSTGPSIPSGWEISSEGKIVPVSASPINISRINPLLLCGPFTFFFFAAIRRWP</sequence>
<reference key="1">
    <citation type="journal article" date="2011" name="PLoS Genet.">
        <title>Genomic analysis of the necrotrophic fungal pathogens Sclerotinia sclerotiorum and Botrytis cinerea.</title>
        <authorList>
            <person name="Amselem J."/>
            <person name="Cuomo C.A."/>
            <person name="van Kan J.A.L."/>
            <person name="Viaud M."/>
            <person name="Benito E.P."/>
            <person name="Couloux A."/>
            <person name="Coutinho P.M."/>
            <person name="de Vries R.P."/>
            <person name="Dyer P.S."/>
            <person name="Fillinger S."/>
            <person name="Fournier E."/>
            <person name="Gout L."/>
            <person name="Hahn M."/>
            <person name="Kohn L."/>
            <person name="Lapalu N."/>
            <person name="Plummer K.M."/>
            <person name="Pradier J.-M."/>
            <person name="Quevillon E."/>
            <person name="Sharon A."/>
            <person name="Simon A."/>
            <person name="ten Have A."/>
            <person name="Tudzynski B."/>
            <person name="Tudzynski P."/>
            <person name="Wincker P."/>
            <person name="Andrew M."/>
            <person name="Anthouard V."/>
            <person name="Beever R.E."/>
            <person name="Beffa R."/>
            <person name="Benoit I."/>
            <person name="Bouzid O."/>
            <person name="Brault B."/>
            <person name="Chen Z."/>
            <person name="Choquer M."/>
            <person name="Collemare J."/>
            <person name="Cotton P."/>
            <person name="Danchin E.G."/>
            <person name="Da Silva C."/>
            <person name="Gautier A."/>
            <person name="Giraud C."/>
            <person name="Giraud T."/>
            <person name="Gonzalez C."/>
            <person name="Grossetete S."/>
            <person name="Gueldener U."/>
            <person name="Henrissat B."/>
            <person name="Howlett B.J."/>
            <person name="Kodira C."/>
            <person name="Kretschmer M."/>
            <person name="Lappartient A."/>
            <person name="Leroch M."/>
            <person name="Levis C."/>
            <person name="Mauceli E."/>
            <person name="Neuveglise C."/>
            <person name="Oeser B."/>
            <person name="Pearson M."/>
            <person name="Poulain J."/>
            <person name="Poussereau N."/>
            <person name="Quesneville H."/>
            <person name="Rascle C."/>
            <person name="Schumacher J."/>
            <person name="Segurens B."/>
            <person name="Sexton A."/>
            <person name="Silva E."/>
            <person name="Sirven C."/>
            <person name="Soanes D.M."/>
            <person name="Talbot N.J."/>
            <person name="Templeton M."/>
            <person name="Yandava C."/>
            <person name="Yarden O."/>
            <person name="Zeng Q."/>
            <person name="Rollins J.A."/>
            <person name="Lebrun M.-H."/>
            <person name="Dickman M."/>
        </authorList>
    </citation>
    <scope>NUCLEOTIDE SEQUENCE [LARGE SCALE GENOMIC DNA]</scope>
    <source>
        <strain>B05.10</strain>
    </source>
</reference>
<reference key="2">
    <citation type="journal article" date="2012" name="Eukaryot. Cell">
        <title>Genome update of Botrytis cinerea strains B05.10 and T4.</title>
        <authorList>
            <person name="Staats M."/>
            <person name="van Kan J.A.L."/>
        </authorList>
    </citation>
    <scope>NUCLEOTIDE SEQUENCE [LARGE SCALE GENOMIC DNA]</scope>
    <scope>GENOME REANNOTATION</scope>
    <source>
        <strain>B05.10</strain>
    </source>
</reference>
<reference key="3">
    <citation type="journal article" date="2017" name="Mol. Plant Pathol.">
        <title>A gapless genome sequence of the fungus Botrytis cinerea.</title>
        <authorList>
            <person name="van Kan J.A.L."/>
            <person name="Stassen J.H.M."/>
            <person name="Mosbach A."/>
            <person name="van der Lee T.A.J."/>
            <person name="Faino L."/>
            <person name="Farmer A.D."/>
            <person name="Papasotiriou D.G."/>
            <person name="Zhou S."/>
            <person name="Seidl M.F."/>
            <person name="Cottam E."/>
            <person name="Edel D."/>
            <person name="Hahn M."/>
            <person name="Schwartz D.C."/>
            <person name="Dietrich R.A."/>
            <person name="Widdison S."/>
            <person name="Scalliet G."/>
        </authorList>
    </citation>
    <scope>NUCLEOTIDE SEQUENCE [LARGE SCALE GENOMIC DNA]</scope>
    <scope>GENOME REANNOTATION</scope>
    <source>
        <strain>B05.10</strain>
    </source>
</reference>
<reference key="4">
    <citation type="journal article" date="2021" name="Nat. Commun.">
        <title>The Botrytis cinerea Crh1 transglycosylase is a cytoplasmic effector triggering plant cell death and defense response.</title>
        <authorList>
            <person name="Bi K."/>
            <person name="Scalschi L."/>
            <person name="Jaiswal N."/>
            <person name="Mengiste T."/>
            <person name="Fried R."/>
            <person name="Sanz A.B."/>
            <person name="Arroyo J."/>
            <person name="Zhu W."/>
            <person name="Masrati G."/>
            <person name="Sharon A."/>
        </authorList>
    </citation>
    <scope>FUNCTION</scope>
</reference>
<name>CRH4_BOTFB</name>
<organism>
    <name type="scientific">Botryotinia fuckeliana (strain B05.10)</name>
    <name type="common">Noble rot fungus</name>
    <name type="synonym">Botrytis cinerea</name>
    <dbReference type="NCBI Taxonomy" id="332648"/>
    <lineage>
        <taxon>Eukaryota</taxon>
        <taxon>Fungi</taxon>
        <taxon>Dikarya</taxon>
        <taxon>Ascomycota</taxon>
        <taxon>Pezizomycotina</taxon>
        <taxon>Leotiomycetes</taxon>
        <taxon>Helotiales</taxon>
        <taxon>Sclerotiniaceae</taxon>
        <taxon>Botrytis</taxon>
    </lineage>
</organism>
<accession>A0A384JN58</accession>
<keyword id="KW-1003">Cell membrane</keyword>
<keyword id="KW-0961">Cell wall biogenesis/degradation</keyword>
<keyword id="KW-1015">Disulfide bond</keyword>
<keyword id="KW-0325">Glycoprotein</keyword>
<keyword id="KW-0326">Glycosidase</keyword>
<keyword id="KW-0328">Glycosyltransferase</keyword>
<keyword id="KW-0336">GPI-anchor</keyword>
<keyword id="KW-0378">Hydrolase</keyword>
<keyword id="KW-0449">Lipoprotein</keyword>
<keyword id="KW-0472">Membrane</keyword>
<keyword id="KW-1185">Reference proteome</keyword>
<keyword id="KW-0732">Signal</keyword>
<keyword id="KW-0808">Transferase</keyword>
<proteinExistence type="inferred from homology"/>